<evidence type="ECO:0000255" key="1">
    <source>
        <dbReference type="HAMAP-Rule" id="MF_00388"/>
    </source>
</evidence>
<keyword id="KW-0378">Hydrolase</keyword>
<keyword id="KW-0441">Lipid A biosynthesis</keyword>
<keyword id="KW-0444">Lipid biosynthesis</keyword>
<keyword id="KW-0443">Lipid metabolism</keyword>
<keyword id="KW-0479">Metal-binding</keyword>
<keyword id="KW-1185">Reference proteome</keyword>
<keyword id="KW-0862">Zinc</keyword>
<reference key="1">
    <citation type="submission" date="2007-07" db="EMBL/GenBank/DDBJ databases">
        <title>Genome sequence of Campylobacter curvus 525.92 isolated from human feces.</title>
        <authorList>
            <person name="Fouts D.E."/>
            <person name="Mongodin E.F."/>
            <person name="Puiu D."/>
            <person name="Sebastian Y."/>
            <person name="Miller W.G."/>
            <person name="Mandrell R.E."/>
            <person name="Lastovica A.J."/>
            <person name="Nelson K.E."/>
        </authorList>
    </citation>
    <scope>NUCLEOTIDE SEQUENCE [LARGE SCALE GENOMIC DNA]</scope>
    <source>
        <strain>525.92</strain>
    </source>
</reference>
<sequence length="294" mass="32548">MKQTTIARRVETVGIGLHKGEPIRLVLEPLDANMGIVFHRTDIGASFKAEPANVVNTQMATVIGNEKGFISTVEHLLSAINGYGIDNIRILVDANEIPVMDGSAISFCMLLDEAGIKQLDEGKKVILVRKEVEVAEGSKFVRTVPSRNPKFDYTIKFNHPVIGEQRYVFEFSKSRYVKEIARARTFGFLKDLQRLQAQNLALGASLDNAVAIDDTHILNPEGLRFENEFVRHKILDAVGDLSLLGAPLLGDYIAFAGSHDLNHKLTLAVLADEKNYEIATLSGELLKDYQKVFA</sequence>
<comment type="function">
    <text evidence="1">Catalyzes the hydrolysis of UDP-3-O-myristoyl-N-acetylglucosamine to form UDP-3-O-myristoylglucosamine and acetate, the committed step in lipid A biosynthesis.</text>
</comment>
<comment type="catalytic activity">
    <reaction evidence="1">
        <text>a UDP-3-O-[(3R)-3-hydroxyacyl]-N-acetyl-alpha-D-glucosamine + H2O = a UDP-3-O-[(3R)-3-hydroxyacyl]-alpha-D-glucosamine + acetate</text>
        <dbReference type="Rhea" id="RHEA:67816"/>
        <dbReference type="ChEBI" id="CHEBI:15377"/>
        <dbReference type="ChEBI" id="CHEBI:30089"/>
        <dbReference type="ChEBI" id="CHEBI:137740"/>
        <dbReference type="ChEBI" id="CHEBI:173225"/>
        <dbReference type="EC" id="3.5.1.108"/>
    </reaction>
</comment>
<comment type="cofactor">
    <cofactor evidence="1">
        <name>Zn(2+)</name>
        <dbReference type="ChEBI" id="CHEBI:29105"/>
    </cofactor>
</comment>
<comment type="pathway">
    <text evidence="1">Glycolipid biosynthesis; lipid IV(A) biosynthesis; lipid IV(A) from (3R)-3-hydroxytetradecanoyl-[acyl-carrier-protein] and UDP-N-acetyl-alpha-D-glucosamine: step 2/6.</text>
</comment>
<comment type="similarity">
    <text evidence="1">Belongs to the LpxC family.</text>
</comment>
<proteinExistence type="inferred from homology"/>
<name>LPXC_CAMC5</name>
<organism>
    <name type="scientific">Campylobacter curvus (strain 525.92)</name>
    <dbReference type="NCBI Taxonomy" id="360105"/>
    <lineage>
        <taxon>Bacteria</taxon>
        <taxon>Pseudomonadati</taxon>
        <taxon>Campylobacterota</taxon>
        <taxon>Epsilonproteobacteria</taxon>
        <taxon>Campylobacterales</taxon>
        <taxon>Campylobacteraceae</taxon>
        <taxon>Campylobacter</taxon>
    </lineage>
</organism>
<feature type="chain" id="PRO_1000013199" description="UDP-3-O-acyl-N-acetylglucosamine deacetylase">
    <location>
        <begin position="1"/>
        <end position="294"/>
    </location>
</feature>
<feature type="active site" description="Proton donor" evidence="1">
    <location>
        <position position="259"/>
    </location>
</feature>
<feature type="binding site" evidence="1">
    <location>
        <position position="75"/>
    </location>
    <ligand>
        <name>Zn(2+)</name>
        <dbReference type="ChEBI" id="CHEBI:29105"/>
    </ligand>
</feature>
<feature type="binding site" evidence="1">
    <location>
        <position position="232"/>
    </location>
    <ligand>
        <name>Zn(2+)</name>
        <dbReference type="ChEBI" id="CHEBI:29105"/>
    </ligand>
</feature>
<feature type="binding site" evidence="1">
    <location>
        <position position="236"/>
    </location>
    <ligand>
        <name>Zn(2+)</name>
        <dbReference type="ChEBI" id="CHEBI:29105"/>
    </ligand>
</feature>
<dbReference type="EC" id="3.5.1.108" evidence="1"/>
<dbReference type="EMBL" id="CP000767">
    <property type="protein sequence ID" value="EAT99422.2"/>
    <property type="molecule type" value="Genomic_DNA"/>
</dbReference>
<dbReference type="RefSeq" id="WP_011992629.1">
    <property type="nucleotide sequence ID" value="NC_009715.2"/>
</dbReference>
<dbReference type="SMR" id="A7GZZ5"/>
<dbReference type="STRING" id="360105.CCV52592_1101"/>
<dbReference type="KEGG" id="ccv:CCV52592_1101"/>
<dbReference type="HOGENOM" id="CLU_046528_1_0_7"/>
<dbReference type="OrthoDB" id="9802746at2"/>
<dbReference type="UniPathway" id="UPA00359">
    <property type="reaction ID" value="UER00478"/>
</dbReference>
<dbReference type="Proteomes" id="UP000006380">
    <property type="component" value="Chromosome"/>
</dbReference>
<dbReference type="GO" id="GO:0016020">
    <property type="term" value="C:membrane"/>
    <property type="evidence" value="ECO:0007669"/>
    <property type="project" value="GOC"/>
</dbReference>
<dbReference type="GO" id="GO:0046872">
    <property type="term" value="F:metal ion binding"/>
    <property type="evidence" value="ECO:0007669"/>
    <property type="project" value="UniProtKB-KW"/>
</dbReference>
<dbReference type="GO" id="GO:0103117">
    <property type="term" value="F:UDP-3-O-acyl-N-acetylglucosamine deacetylase activity"/>
    <property type="evidence" value="ECO:0007669"/>
    <property type="project" value="UniProtKB-UniRule"/>
</dbReference>
<dbReference type="GO" id="GO:0009245">
    <property type="term" value="P:lipid A biosynthetic process"/>
    <property type="evidence" value="ECO:0007669"/>
    <property type="project" value="UniProtKB-UniRule"/>
</dbReference>
<dbReference type="Gene3D" id="3.30.230.20">
    <property type="entry name" value="lpxc deacetylase, domain 1"/>
    <property type="match status" value="1"/>
</dbReference>
<dbReference type="Gene3D" id="3.30.1700.10">
    <property type="entry name" value="lpxc deacetylase, domain 2"/>
    <property type="match status" value="1"/>
</dbReference>
<dbReference type="HAMAP" id="MF_00388">
    <property type="entry name" value="LpxC"/>
    <property type="match status" value="1"/>
</dbReference>
<dbReference type="InterPro" id="IPR020568">
    <property type="entry name" value="Ribosomal_Su5_D2-typ_SF"/>
</dbReference>
<dbReference type="InterPro" id="IPR004463">
    <property type="entry name" value="UDP-acyl_GlcNac_deAcase"/>
</dbReference>
<dbReference type="InterPro" id="IPR011334">
    <property type="entry name" value="UDP-acyl_GlcNac_deAcase_C"/>
</dbReference>
<dbReference type="InterPro" id="IPR015870">
    <property type="entry name" value="UDP-acyl_N-AcGlcN_deAcase_N"/>
</dbReference>
<dbReference type="NCBIfam" id="TIGR00325">
    <property type="entry name" value="lpxC"/>
    <property type="match status" value="1"/>
</dbReference>
<dbReference type="PANTHER" id="PTHR33694">
    <property type="entry name" value="UDP-3-O-ACYL-N-ACETYLGLUCOSAMINE DEACETYLASE 1, MITOCHONDRIAL-RELATED"/>
    <property type="match status" value="1"/>
</dbReference>
<dbReference type="PANTHER" id="PTHR33694:SF1">
    <property type="entry name" value="UDP-3-O-ACYL-N-ACETYLGLUCOSAMINE DEACETYLASE 1, MITOCHONDRIAL-RELATED"/>
    <property type="match status" value="1"/>
</dbReference>
<dbReference type="Pfam" id="PF03331">
    <property type="entry name" value="LpxC"/>
    <property type="match status" value="1"/>
</dbReference>
<dbReference type="SUPFAM" id="SSF54211">
    <property type="entry name" value="Ribosomal protein S5 domain 2-like"/>
    <property type="match status" value="2"/>
</dbReference>
<accession>A7GZZ5</accession>
<gene>
    <name evidence="1" type="primary">lpxC</name>
    <name type="ordered locus">Ccur92_14830</name>
    <name type="ORF">CCV52592_1101</name>
</gene>
<protein>
    <recommendedName>
        <fullName evidence="1">UDP-3-O-acyl-N-acetylglucosamine deacetylase</fullName>
        <shortName evidence="1">UDP-3-O-acyl-GlcNAc deacetylase</shortName>
        <ecNumber evidence="1">3.5.1.108</ecNumber>
    </recommendedName>
    <alternativeName>
        <fullName evidence="1">UDP-3-O-[R-3-hydroxymyristoyl]-N-acetylglucosamine deacetylase</fullName>
    </alternativeName>
</protein>